<feature type="chain" id="PRO_0000151442" description="Phosphoribosylamine--glycine ligase">
    <location>
        <begin position="1"/>
        <end position="425"/>
    </location>
</feature>
<feature type="domain" description="ATP-grasp" evidence="2">
    <location>
        <begin position="110"/>
        <end position="317"/>
    </location>
</feature>
<feature type="binding site" evidence="2">
    <location>
        <begin position="137"/>
        <end position="198"/>
    </location>
    <ligand>
        <name>ATP</name>
        <dbReference type="ChEBI" id="CHEBI:30616"/>
    </ligand>
</feature>
<feature type="binding site" evidence="2">
    <location>
        <position position="287"/>
    </location>
    <ligand>
        <name>Mg(2+)</name>
        <dbReference type="ChEBI" id="CHEBI:18420"/>
    </ligand>
</feature>
<feature type="binding site" evidence="2">
    <location>
        <position position="289"/>
    </location>
    <ligand>
        <name>Mg(2+)</name>
        <dbReference type="ChEBI" id="CHEBI:18420"/>
    </ligand>
</feature>
<comment type="catalytic activity">
    <reaction evidence="2">
        <text>5-phospho-beta-D-ribosylamine + glycine + ATP = N(1)-(5-phospho-beta-D-ribosyl)glycinamide + ADP + phosphate + H(+)</text>
        <dbReference type="Rhea" id="RHEA:17453"/>
        <dbReference type="ChEBI" id="CHEBI:15378"/>
        <dbReference type="ChEBI" id="CHEBI:30616"/>
        <dbReference type="ChEBI" id="CHEBI:43474"/>
        <dbReference type="ChEBI" id="CHEBI:57305"/>
        <dbReference type="ChEBI" id="CHEBI:58681"/>
        <dbReference type="ChEBI" id="CHEBI:143788"/>
        <dbReference type="ChEBI" id="CHEBI:456216"/>
        <dbReference type="EC" id="6.3.4.13"/>
    </reaction>
</comment>
<comment type="cofactor">
    <cofactor evidence="1">
        <name>Mg(2+)</name>
        <dbReference type="ChEBI" id="CHEBI:18420"/>
    </cofactor>
    <cofactor evidence="1">
        <name>Mn(2+)</name>
        <dbReference type="ChEBI" id="CHEBI:29035"/>
    </cofactor>
    <text evidence="1">Binds 1 Mg(2+) or Mn(2+) ion per subunit.</text>
</comment>
<comment type="pathway">
    <text evidence="2">Purine metabolism; IMP biosynthesis via de novo pathway; N(1)-(5-phospho-D-ribosyl)glycinamide from 5-phospho-alpha-D-ribose 1-diphosphate: step 2/2.</text>
</comment>
<comment type="similarity">
    <text evidence="2">Belongs to the GARS family.</text>
</comment>
<accession>Q8KBV8</accession>
<sequence>MKVLIIGSGAREHAMAWAVARSSKVSTVFVAPGNGGTATMGGKVRNTPVKATDIDALLELVAKESIGLTVVGPEQPLEAGIVNRFREAGFKVVGPTAEAAQLETSKVFAKEFMKRHGIPTAGYEVFRDYASAKAFLETCPTFPQVIKASGLCAGKGVVVAMSRDEALEAIHEFFESRIFGDAADEVVIEAFLSGQEASVFALTDGQNYQLFLSAQDHKRIGEGDTGKNTGGMGAYAPAPLVTPEVMRRVEEEVIRPTLAGMRADGYAYTGFLYVGLMIDKGVPSVVEYNARLGDPETQVVLPMLKSDLFDALLASVEGGLEVVPFEMQEGAAATVVMASAGYPDAYETGKVITIDPTVNDMEGVLVFHAGTRRDGDALVTSGGRVLSVTACAGSLKEALDRVYRAVDAIEFEGAYCRRDIGAKAL</sequence>
<organism>
    <name type="scientific">Chlorobaculum tepidum (strain ATCC 49652 / DSM 12025 / NBRC 103806 / TLS)</name>
    <name type="common">Chlorobium tepidum</name>
    <dbReference type="NCBI Taxonomy" id="194439"/>
    <lineage>
        <taxon>Bacteria</taxon>
        <taxon>Pseudomonadati</taxon>
        <taxon>Chlorobiota</taxon>
        <taxon>Chlorobiia</taxon>
        <taxon>Chlorobiales</taxon>
        <taxon>Chlorobiaceae</taxon>
        <taxon>Chlorobaculum</taxon>
    </lineage>
</organism>
<gene>
    <name evidence="2" type="primary">purD</name>
    <name type="ordered locus">CT1674</name>
</gene>
<proteinExistence type="inferred from homology"/>
<dbReference type="EC" id="6.3.4.13" evidence="2"/>
<dbReference type="EMBL" id="AE006470">
    <property type="protein sequence ID" value="AAM72899.1"/>
    <property type="molecule type" value="Genomic_DNA"/>
</dbReference>
<dbReference type="RefSeq" id="NP_662557.1">
    <property type="nucleotide sequence ID" value="NC_002932.3"/>
</dbReference>
<dbReference type="RefSeq" id="WP_010933338.1">
    <property type="nucleotide sequence ID" value="NC_002932.3"/>
</dbReference>
<dbReference type="SMR" id="Q8KBV8"/>
<dbReference type="STRING" id="194439.CT1674"/>
<dbReference type="EnsemblBacteria" id="AAM72899">
    <property type="protein sequence ID" value="AAM72899"/>
    <property type="gene ID" value="CT1674"/>
</dbReference>
<dbReference type="KEGG" id="cte:CT1674"/>
<dbReference type="PATRIC" id="fig|194439.7.peg.1512"/>
<dbReference type="eggNOG" id="COG0151">
    <property type="taxonomic scope" value="Bacteria"/>
</dbReference>
<dbReference type="HOGENOM" id="CLU_027420_3_1_10"/>
<dbReference type="OrthoDB" id="9807240at2"/>
<dbReference type="UniPathway" id="UPA00074">
    <property type="reaction ID" value="UER00125"/>
</dbReference>
<dbReference type="Proteomes" id="UP000001007">
    <property type="component" value="Chromosome"/>
</dbReference>
<dbReference type="GO" id="GO:0005524">
    <property type="term" value="F:ATP binding"/>
    <property type="evidence" value="ECO:0007669"/>
    <property type="project" value="UniProtKB-KW"/>
</dbReference>
<dbReference type="GO" id="GO:0046872">
    <property type="term" value="F:metal ion binding"/>
    <property type="evidence" value="ECO:0007669"/>
    <property type="project" value="UniProtKB-KW"/>
</dbReference>
<dbReference type="GO" id="GO:0004637">
    <property type="term" value="F:phosphoribosylamine-glycine ligase activity"/>
    <property type="evidence" value="ECO:0007669"/>
    <property type="project" value="UniProtKB-UniRule"/>
</dbReference>
<dbReference type="GO" id="GO:0006189">
    <property type="term" value="P:'de novo' IMP biosynthetic process"/>
    <property type="evidence" value="ECO:0007669"/>
    <property type="project" value="UniProtKB-UniRule"/>
</dbReference>
<dbReference type="GO" id="GO:0009113">
    <property type="term" value="P:purine nucleobase biosynthetic process"/>
    <property type="evidence" value="ECO:0007669"/>
    <property type="project" value="InterPro"/>
</dbReference>
<dbReference type="FunFam" id="3.40.50.20:FF:000006">
    <property type="entry name" value="Phosphoribosylamine--glycine ligase, chloroplastic"/>
    <property type="match status" value="1"/>
</dbReference>
<dbReference type="FunFam" id="3.90.600.10:FF:000001">
    <property type="entry name" value="Trifunctional purine biosynthetic protein adenosine-3"/>
    <property type="match status" value="1"/>
</dbReference>
<dbReference type="Gene3D" id="3.40.50.20">
    <property type="match status" value="1"/>
</dbReference>
<dbReference type="Gene3D" id="3.30.1490.20">
    <property type="entry name" value="ATP-grasp fold, A domain"/>
    <property type="match status" value="1"/>
</dbReference>
<dbReference type="Gene3D" id="3.30.470.20">
    <property type="entry name" value="ATP-grasp fold, B domain"/>
    <property type="match status" value="1"/>
</dbReference>
<dbReference type="Gene3D" id="3.90.600.10">
    <property type="entry name" value="Phosphoribosylglycinamide synthetase, C-terminal domain"/>
    <property type="match status" value="1"/>
</dbReference>
<dbReference type="HAMAP" id="MF_00138">
    <property type="entry name" value="GARS"/>
    <property type="match status" value="1"/>
</dbReference>
<dbReference type="InterPro" id="IPR011761">
    <property type="entry name" value="ATP-grasp"/>
</dbReference>
<dbReference type="InterPro" id="IPR013815">
    <property type="entry name" value="ATP_grasp_subdomain_1"/>
</dbReference>
<dbReference type="InterPro" id="IPR016185">
    <property type="entry name" value="PreATP-grasp_dom_sf"/>
</dbReference>
<dbReference type="InterPro" id="IPR020561">
    <property type="entry name" value="PRibGlycinamid_synth_ATP-grasp"/>
</dbReference>
<dbReference type="InterPro" id="IPR000115">
    <property type="entry name" value="PRibGlycinamide_synth"/>
</dbReference>
<dbReference type="InterPro" id="IPR020560">
    <property type="entry name" value="PRibGlycinamide_synth_C-dom"/>
</dbReference>
<dbReference type="InterPro" id="IPR037123">
    <property type="entry name" value="PRibGlycinamide_synth_C_sf"/>
</dbReference>
<dbReference type="InterPro" id="IPR020559">
    <property type="entry name" value="PRibGlycinamide_synth_CS"/>
</dbReference>
<dbReference type="InterPro" id="IPR020562">
    <property type="entry name" value="PRibGlycinamide_synth_N"/>
</dbReference>
<dbReference type="InterPro" id="IPR011054">
    <property type="entry name" value="Rudment_hybrid_motif"/>
</dbReference>
<dbReference type="NCBIfam" id="TIGR00877">
    <property type="entry name" value="purD"/>
    <property type="match status" value="1"/>
</dbReference>
<dbReference type="PANTHER" id="PTHR43472">
    <property type="entry name" value="PHOSPHORIBOSYLAMINE--GLYCINE LIGASE"/>
    <property type="match status" value="1"/>
</dbReference>
<dbReference type="PANTHER" id="PTHR43472:SF1">
    <property type="entry name" value="PHOSPHORIBOSYLAMINE--GLYCINE LIGASE, CHLOROPLASTIC"/>
    <property type="match status" value="1"/>
</dbReference>
<dbReference type="Pfam" id="PF01071">
    <property type="entry name" value="GARS_A"/>
    <property type="match status" value="1"/>
</dbReference>
<dbReference type="Pfam" id="PF02843">
    <property type="entry name" value="GARS_C"/>
    <property type="match status" value="1"/>
</dbReference>
<dbReference type="Pfam" id="PF02844">
    <property type="entry name" value="GARS_N"/>
    <property type="match status" value="1"/>
</dbReference>
<dbReference type="SMART" id="SM01209">
    <property type="entry name" value="GARS_A"/>
    <property type="match status" value="1"/>
</dbReference>
<dbReference type="SMART" id="SM01210">
    <property type="entry name" value="GARS_C"/>
    <property type="match status" value="1"/>
</dbReference>
<dbReference type="SUPFAM" id="SSF56059">
    <property type="entry name" value="Glutathione synthetase ATP-binding domain-like"/>
    <property type="match status" value="1"/>
</dbReference>
<dbReference type="SUPFAM" id="SSF52440">
    <property type="entry name" value="PreATP-grasp domain"/>
    <property type="match status" value="1"/>
</dbReference>
<dbReference type="SUPFAM" id="SSF51246">
    <property type="entry name" value="Rudiment single hybrid motif"/>
    <property type="match status" value="1"/>
</dbReference>
<dbReference type="PROSITE" id="PS50975">
    <property type="entry name" value="ATP_GRASP"/>
    <property type="match status" value="1"/>
</dbReference>
<dbReference type="PROSITE" id="PS00184">
    <property type="entry name" value="GARS"/>
    <property type="match status" value="1"/>
</dbReference>
<keyword id="KW-0067">ATP-binding</keyword>
<keyword id="KW-0436">Ligase</keyword>
<keyword id="KW-0460">Magnesium</keyword>
<keyword id="KW-0464">Manganese</keyword>
<keyword id="KW-0479">Metal-binding</keyword>
<keyword id="KW-0547">Nucleotide-binding</keyword>
<keyword id="KW-0658">Purine biosynthesis</keyword>
<keyword id="KW-1185">Reference proteome</keyword>
<protein>
    <recommendedName>
        <fullName evidence="2">Phosphoribosylamine--glycine ligase</fullName>
        <ecNumber evidence="2">6.3.4.13</ecNumber>
    </recommendedName>
    <alternativeName>
        <fullName evidence="2">GARS</fullName>
    </alternativeName>
    <alternativeName>
        <fullName evidence="2">Glycinamide ribonucleotide synthetase</fullName>
    </alternativeName>
    <alternativeName>
        <fullName evidence="2">Phosphoribosylglycinamide synthetase</fullName>
    </alternativeName>
</protein>
<evidence type="ECO:0000250" key="1"/>
<evidence type="ECO:0000255" key="2">
    <source>
        <dbReference type="HAMAP-Rule" id="MF_00138"/>
    </source>
</evidence>
<reference key="1">
    <citation type="journal article" date="2002" name="Proc. Natl. Acad. Sci. U.S.A.">
        <title>The complete genome sequence of Chlorobium tepidum TLS, a photosynthetic, anaerobic, green-sulfur bacterium.</title>
        <authorList>
            <person name="Eisen J.A."/>
            <person name="Nelson K.E."/>
            <person name="Paulsen I.T."/>
            <person name="Heidelberg J.F."/>
            <person name="Wu M."/>
            <person name="Dodson R.J."/>
            <person name="DeBoy R.T."/>
            <person name="Gwinn M.L."/>
            <person name="Nelson W.C."/>
            <person name="Haft D.H."/>
            <person name="Hickey E.K."/>
            <person name="Peterson J.D."/>
            <person name="Durkin A.S."/>
            <person name="Kolonay J.F."/>
            <person name="Yang F."/>
            <person name="Holt I.E."/>
            <person name="Umayam L.A."/>
            <person name="Mason T.M."/>
            <person name="Brenner M."/>
            <person name="Shea T.P."/>
            <person name="Parksey D.S."/>
            <person name="Nierman W.C."/>
            <person name="Feldblyum T.V."/>
            <person name="Hansen C.L."/>
            <person name="Craven M.B."/>
            <person name="Radune D."/>
            <person name="Vamathevan J.J."/>
            <person name="Khouri H.M."/>
            <person name="White O."/>
            <person name="Gruber T.M."/>
            <person name="Ketchum K.A."/>
            <person name="Venter J.C."/>
            <person name="Tettelin H."/>
            <person name="Bryant D.A."/>
            <person name="Fraser C.M."/>
        </authorList>
    </citation>
    <scope>NUCLEOTIDE SEQUENCE [LARGE SCALE GENOMIC DNA]</scope>
    <source>
        <strain>ATCC 49652 / DSM 12025 / NBRC 103806 / TLS</strain>
    </source>
</reference>
<name>PUR2_CHLTE</name>